<dbReference type="SMR" id="P83247"/>
<dbReference type="ArachnoServer" id="AS000185">
    <property type="toxin name" value="M-oxotoxin-Ot1a"/>
</dbReference>
<dbReference type="GO" id="GO:0005576">
    <property type="term" value="C:extracellular region"/>
    <property type="evidence" value="ECO:0007669"/>
    <property type="project" value="UniProtKB-SubCell"/>
</dbReference>
<dbReference type="GO" id="GO:0016020">
    <property type="term" value="C:membrane"/>
    <property type="evidence" value="ECO:0007669"/>
    <property type="project" value="UniProtKB-KW"/>
</dbReference>
<dbReference type="GO" id="GO:0044218">
    <property type="term" value="C:other organism cell membrane"/>
    <property type="evidence" value="ECO:0007669"/>
    <property type="project" value="UniProtKB-KW"/>
</dbReference>
<dbReference type="GO" id="GO:0090729">
    <property type="term" value="F:toxin activity"/>
    <property type="evidence" value="ECO:0007669"/>
    <property type="project" value="UniProtKB-KW"/>
</dbReference>
<dbReference type="GO" id="GO:0042742">
    <property type="term" value="P:defense response to bacterium"/>
    <property type="evidence" value="ECO:0007669"/>
    <property type="project" value="UniProtKB-KW"/>
</dbReference>
<dbReference type="GO" id="GO:0031640">
    <property type="term" value="P:killing of cells of another organism"/>
    <property type="evidence" value="ECO:0007669"/>
    <property type="project" value="UniProtKB-KW"/>
</dbReference>
<dbReference type="GO" id="GO:0006811">
    <property type="term" value="P:monoatomic ion transport"/>
    <property type="evidence" value="ECO:0007669"/>
    <property type="project" value="UniProtKB-KW"/>
</dbReference>
<name>TOP1_OXYTA</name>
<comment type="function">
    <text evidence="1 2">Disrupts cell membranes, particularly those rich in phosphocholine, through formation of pores. Has antimicrobial activity against Gram-negative bacterium E.coli, Gram-positive bacteria B.subtilis and S.aureus, and hemolytic activity against sheep, pig and guinea pig erythrocytes. Has insecticidal activity against S.frugiperda ovarian cells by opening non-selective ion channels. Enhances the insecticidal activity of spider venom neurotoxic peptides.</text>
</comment>
<comment type="subcellular location">
    <subcellularLocation>
        <location evidence="1">Secreted</location>
    </subcellularLocation>
    <subcellularLocation>
        <location evidence="1">Target cell membrane</location>
    </subcellularLocation>
    <text>Forms a transmembrane alpha-helix in the target cell membrane. Forms a membrane channel in the prey.</text>
</comment>
<comment type="tissue specificity">
    <text evidence="1">Expressed by the venom gland.</text>
</comment>
<comment type="mass spectrometry" mass="5221.2" method="MALDI" evidence="1"/>
<comment type="similarity">
    <text>Belongs to the cationic peptide 02 (oxyopinin-2) family.</text>
</comment>
<protein>
    <recommendedName>
        <fullName>M-oxotoxin-Ot1a</fullName>
        <shortName>M-OXTX-Ot1a</shortName>
    </recommendedName>
    <alternativeName>
        <fullName>Oxki1</fullName>
    </alternativeName>
    <alternativeName>
        <fullName>Oxyopinin-1</fullName>
    </alternativeName>
</protein>
<evidence type="ECO:0000269" key="1">
    <source>
    </source>
</evidence>
<evidence type="ECO:0000269" key="2">
    <source>
    </source>
</evidence>
<accession>P83247</accession>
<proteinExistence type="evidence at protein level"/>
<feature type="chain" id="PRO_0000087675" description="M-oxotoxin-Ot1a">
    <location>
        <begin position="1"/>
        <end position="48"/>
    </location>
</feature>
<sequence length="48" mass="5221">FRGLAKLLKIGLKSFARVLKKVLPKAAKAGKALAKSMADENAIRQQNQ</sequence>
<organism>
    <name type="scientific">Oxyopes takobius</name>
    <name type="common">Lynx spider</name>
    <name type="synonym">Oxyopes foliiformis</name>
    <dbReference type="NCBI Taxonomy" id="666126"/>
    <lineage>
        <taxon>Eukaryota</taxon>
        <taxon>Metazoa</taxon>
        <taxon>Ecdysozoa</taxon>
        <taxon>Arthropoda</taxon>
        <taxon>Chelicerata</taxon>
        <taxon>Arachnida</taxon>
        <taxon>Araneae</taxon>
        <taxon>Araneomorphae</taxon>
        <taxon>Entelegynae</taxon>
        <taxon>Lycosoidea</taxon>
        <taxon>Oxyopidae</taxon>
        <taxon>Oxyopes</taxon>
    </lineage>
</organism>
<keyword id="KW-0044">Antibiotic</keyword>
<keyword id="KW-0929">Antimicrobial</keyword>
<keyword id="KW-0204">Cytolysis</keyword>
<keyword id="KW-0903">Direct protein sequencing</keyword>
<keyword id="KW-0354">Hemolysis</keyword>
<keyword id="KW-0406">Ion transport</keyword>
<keyword id="KW-0472">Membrane</keyword>
<keyword id="KW-0964">Secreted</keyword>
<keyword id="KW-1052">Target cell membrane</keyword>
<keyword id="KW-1053">Target membrane</keyword>
<keyword id="KW-0800">Toxin</keyword>
<keyword id="KW-0812">Transmembrane</keyword>
<keyword id="KW-0813">Transport</keyword>
<reference key="1">
    <citation type="journal article" date="2002" name="J. Biol. Chem.">
        <title>Oxyopinins, large amphipathic peptides isolated from the venom of the wolf spider Oxyopes kitabensis with cytolytic properties and positive insecticidal cooperativity with spider neurotoxins.</title>
        <authorList>
            <person name="Corzo G."/>
            <person name="Villegas E."/>
            <person name="Gomez-Lagunas F."/>
            <person name="Possani L.D."/>
            <person name="Belokoneva O.S."/>
            <person name="Nakajima T."/>
        </authorList>
    </citation>
    <scope>PROTEIN SEQUENCE</scope>
    <scope>FUNCTION</scope>
    <scope>TISSUE SPECIFICITY</scope>
    <scope>SUBCELLULAR LOCATION</scope>
    <scope>MASS SPECTROMETRY</scope>
    <scope>CIRCULAR DICHROISM ANALYSIS</scope>
    <source>
        <tissue>Venom</tissue>
    </source>
</reference>
<reference key="2">
    <citation type="journal article" date="2004" name="Biochim. Biophys. Acta">
        <title>Pore formation of phospholipid membranes by the action of two hemolytic arachnid peptides of different size.</title>
        <authorList>
            <person name="Belokoneva O.S."/>
            <person name="Satake H."/>
            <person name="Mal'tseva E.L."/>
            <person name="Pal'mina N.P."/>
            <person name="Villegas E."/>
            <person name="Nakajima T."/>
            <person name="Corzo G."/>
        </authorList>
    </citation>
    <scope>FUNCTION</scope>
    <scope>CIRCULAR DICHROISM</scope>
</reference>